<proteinExistence type="inferred from homology"/>
<organism>
    <name type="scientific">Sodalis glossinidius (strain morsitans)</name>
    <dbReference type="NCBI Taxonomy" id="343509"/>
    <lineage>
        <taxon>Bacteria</taxon>
        <taxon>Pseudomonadati</taxon>
        <taxon>Pseudomonadota</taxon>
        <taxon>Gammaproteobacteria</taxon>
        <taxon>Enterobacterales</taxon>
        <taxon>Bruguierivoracaceae</taxon>
        <taxon>Sodalis</taxon>
    </lineage>
</organism>
<gene>
    <name evidence="1" type="primary">rpsD</name>
    <name type="ordered locus">SG2254</name>
</gene>
<name>RS4_SODGM</name>
<dbReference type="EMBL" id="AP008232">
    <property type="protein sequence ID" value="BAE75529.1"/>
    <property type="molecule type" value="Genomic_DNA"/>
</dbReference>
<dbReference type="RefSeq" id="WP_011412065.1">
    <property type="nucleotide sequence ID" value="NZ_LN854557.1"/>
</dbReference>
<dbReference type="SMR" id="Q2NQP6"/>
<dbReference type="STRING" id="343509.SG2254"/>
<dbReference type="KEGG" id="sgl:SG2254"/>
<dbReference type="eggNOG" id="COG0522">
    <property type="taxonomic scope" value="Bacteria"/>
</dbReference>
<dbReference type="HOGENOM" id="CLU_092403_0_2_6"/>
<dbReference type="OrthoDB" id="9803672at2"/>
<dbReference type="BioCyc" id="SGLO343509:SGP1_RS20725-MONOMER"/>
<dbReference type="Proteomes" id="UP000001932">
    <property type="component" value="Chromosome"/>
</dbReference>
<dbReference type="GO" id="GO:0015935">
    <property type="term" value="C:small ribosomal subunit"/>
    <property type="evidence" value="ECO:0007669"/>
    <property type="project" value="InterPro"/>
</dbReference>
<dbReference type="GO" id="GO:0019843">
    <property type="term" value="F:rRNA binding"/>
    <property type="evidence" value="ECO:0007669"/>
    <property type="project" value="UniProtKB-UniRule"/>
</dbReference>
<dbReference type="GO" id="GO:0003735">
    <property type="term" value="F:structural constituent of ribosome"/>
    <property type="evidence" value="ECO:0007669"/>
    <property type="project" value="InterPro"/>
</dbReference>
<dbReference type="GO" id="GO:0042274">
    <property type="term" value="P:ribosomal small subunit biogenesis"/>
    <property type="evidence" value="ECO:0007669"/>
    <property type="project" value="TreeGrafter"/>
</dbReference>
<dbReference type="GO" id="GO:0006412">
    <property type="term" value="P:translation"/>
    <property type="evidence" value="ECO:0007669"/>
    <property type="project" value="UniProtKB-UniRule"/>
</dbReference>
<dbReference type="CDD" id="cd00165">
    <property type="entry name" value="S4"/>
    <property type="match status" value="1"/>
</dbReference>
<dbReference type="FunFam" id="1.10.1050.10:FF:000001">
    <property type="entry name" value="30S ribosomal protein S4"/>
    <property type="match status" value="1"/>
</dbReference>
<dbReference type="FunFam" id="3.10.290.10:FF:000001">
    <property type="entry name" value="30S ribosomal protein S4"/>
    <property type="match status" value="1"/>
</dbReference>
<dbReference type="Gene3D" id="1.10.1050.10">
    <property type="entry name" value="Ribosomal Protein S4 Delta 41, Chain A, domain 1"/>
    <property type="match status" value="1"/>
</dbReference>
<dbReference type="Gene3D" id="3.10.290.10">
    <property type="entry name" value="RNA-binding S4 domain"/>
    <property type="match status" value="1"/>
</dbReference>
<dbReference type="HAMAP" id="MF_01306_B">
    <property type="entry name" value="Ribosomal_uS4_B"/>
    <property type="match status" value="1"/>
</dbReference>
<dbReference type="InterPro" id="IPR022801">
    <property type="entry name" value="Ribosomal_uS4"/>
</dbReference>
<dbReference type="InterPro" id="IPR005709">
    <property type="entry name" value="Ribosomal_uS4_bac-type"/>
</dbReference>
<dbReference type="InterPro" id="IPR018079">
    <property type="entry name" value="Ribosomal_uS4_CS"/>
</dbReference>
<dbReference type="InterPro" id="IPR001912">
    <property type="entry name" value="Ribosomal_uS4_N"/>
</dbReference>
<dbReference type="InterPro" id="IPR002942">
    <property type="entry name" value="S4_RNA-bd"/>
</dbReference>
<dbReference type="InterPro" id="IPR036986">
    <property type="entry name" value="S4_RNA-bd_sf"/>
</dbReference>
<dbReference type="NCBIfam" id="NF003717">
    <property type="entry name" value="PRK05327.1"/>
    <property type="match status" value="1"/>
</dbReference>
<dbReference type="NCBIfam" id="TIGR01017">
    <property type="entry name" value="rpsD_bact"/>
    <property type="match status" value="1"/>
</dbReference>
<dbReference type="PANTHER" id="PTHR11831">
    <property type="entry name" value="30S 40S RIBOSOMAL PROTEIN"/>
    <property type="match status" value="1"/>
</dbReference>
<dbReference type="PANTHER" id="PTHR11831:SF4">
    <property type="entry name" value="SMALL RIBOSOMAL SUBUNIT PROTEIN US4M"/>
    <property type="match status" value="1"/>
</dbReference>
<dbReference type="Pfam" id="PF00163">
    <property type="entry name" value="Ribosomal_S4"/>
    <property type="match status" value="1"/>
</dbReference>
<dbReference type="Pfam" id="PF01479">
    <property type="entry name" value="S4"/>
    <property type="match status" value="1"/>
</dbReference>
<dbReference type="SMART" id="SM01390">
    <property type="entry name" value="Ribosomal_S4"/>
    <property type="match status" value="1"/>
</dbReference>
<dbReference type="SMART" id="SM00363">
    <property type="entry name" value="S4"/>
    <property type="match status" value="1"/>
</dbReference>
<dbReference type="SUPFAM" id="SSF55174">
    <property type="entry name" value="Alpha-L RNA-binding motif"/>
    <property type="match status" value="1"/>
</dbReference>
<dbReference type="PROSITE" id="PS00632">
    <property type="entry name" value="RIBOSOMAL_S4"/>
    <property type="match status" value="1"/>
</dbReference>
<dbReference type="PROSITE" id="PS50889">
    <property type="entry name" value="S4"/>
    <property type="match status" value="1"/>
</dbReference>
<accession>Q2NQP6</accession>
<feature type="chain" id="PRO_0000293372" description="Small ribosomal subunit protein uS4">
    <location>
        <begin position="1"/>
        <end position="206"/>
    </location>
</feature>
<feature type="domain" description="S4 RNA-binding" evidence="1">
    <location>
        <begin position="96"/>
        <end position="157"/>
    </location>
</feature>
<evidence type="ECO:0000255" key="1">
    <source>
        <dbReference type="HAMAP-Rule" id="MF_01306"/>
    </source>
</evidence>
<evidence type="ECO:0000305" key="2"/>
<comment type="function">
    <text evidence="1">One of the primary rRNA binding proteins, it binds directly to 16S rRNA where it nucleates assembly of the body of the 30S subunit.</text>
</comment>
<comment type="function">
    <text evidence="1">With S5 and S12 plays an important role in translational accuracy.</text>
</comment>
<comment type="subunit">
    <text evidence="1">Part of the 30S ribosomal subunit. Contacts protein S5. The interaction surface between S4 and S5 is involved in control of translational fidelity.</text>
</comment>
<comment type="similarity">
    <text evidence="1">Belongs to the universal ribosomal protein uS4 family.</text>
</comment>
<reference key="1">
    <citation type="journal article" date="2006" name="Genome Res.">
        <title>Massive genome erosion and functional adaptations provide insights into the symbiotic lifestyle of Sodalis glossinidius in the tsetse host.</title>
        <authorList>
            <person name="Toh H."/>
            <person name="Weiss B.L."/>
            <person name="Perkin S.A.H."/>
            <person name="Yamashita A."/>
            <person name="Oshima K."/>
            <person name="Hattori M."/>
            <person name="Aksoy S."/>
        </authorList>
    </citation>
    <scope>NUCLEOTIDE SEQUENCE [LARGE SCALE GENOMIC DNA]</scope>
    <source>
        <strain>morsitans</strain>
    </source>
</reference>
<sequence length="206" mass="23623">MARYLGPKLKLSRREGTDLFLKSGVRAIDSKCKIEQPPGQHGARKPRLSDYGVQLREKQKVRRIYGVLERQFRNYYKEAARLKGNTGENLLQLLEGRLDNVVYRMGFGATRAESRQLVSHKAIMVNGRVVNIASYQVTPNDVVSIREKAKKQSRVRASLELAEQREKPTWLEVDAAKMEGVFKRIPERTDLSADINEHLIVELYSK</sequence>
<keyword id="KW-0687">Ribonucleoprotein</keyword>
<keyword id="KW-0689">Ribosomal protein</keyword>
<keyword id="KW-0694">RNA-binding</keyword>
<keyword id="KW-0699">rRNA-binding</keyword>
<protein>
    <recommendedName>
        <fullName evidence="1">Small ribosomal subunit protein uS4</fullName>
    </recommendedName>
    <alternativeName>
        <fullName evidence="2">30S ribosomal protein S4</fullName>
    </alternativeName>
</protein>